<proteinExistence type="evidence at transcript level"/>
<sequence length="843" mass="93580">MYEGKHIHYSEVDHKPLCSYSPKLCKQRRLNGYAFCIRHVLEDRTAPFRQCEYVAKYNSQRCTNPIPKAHDRKYCNSHLQVMGVLPKKERKKKQDTIESLALNITVPSLALKTHNGLEILPPSPPPALVCLLPSDPFSFYKEEKMLKSSGAFLKKPQETLNHKQKQQDHSVDTNHLRTSSLPSTLSHSCLPPLLTGRATQTPINPSSPRAATPTVRSGSLFKTSSSLQDTHQGSKDSTDNKIKLDLNHAFDKKVVPAASGMAPCCDDTQSQLIKKCTVAMQQQAPCLKKLHRLMDQHKGRFQDLNSHLGLDWSEDSEEEDGDWKLVSYQCQRLQEKRSEESRSWAERLAGFCSYLRQKHMHLCREQRGFRRERRSQHALRKALVQAAREEPHQTAQLIQEQHQVTSAPSSTAVSLAGDDSGLCQAVVKGENCRNSALPFTRHCFQHILQNRSQQLFSSCTARFADGAQCSIPVFDITHQTPLCDEHAKKMDNFLRGDISRRTYHHHQQIQRHRPLKKAKPPALSKKHKKKGKRGTQRRPQKPIPPALPQGNLALPSILCLPSQPSGIRSPLTPDLSADEFPDDITNDISDIPHDLELNQEDFSDVLPRLPDDLQDFDLFEGKNSELLPTSEEAEELVRVLQAMGSYPESLACLSGMAELGPVEGVDCRSMPGGVVDLLSARLSAETLSSLELDPSLLHPSEDAFPPSPPSPQPPLTPPSSVGHLTDSTYTQRQPHLLAKMEDSKADLANLPLGKDEDVSHGSWGVLALPLSDSSQFHSLIASDGLLMPTGLSTPCQPSSALSALPQSSQTRSTTTSPTSQTKHLPPPPTVQALWDPSRLTAAP</sequence>
<organism>
    <name type="scientific">Danio rerio</name>
    <name type="common">Zebrafish</name>
    <name type="synonym">Brachydanio rerio</name>
    <dbReference type="NCBI Taxonomy" id="7955"/>
    <lineage>
        <taxon>Eukaryota</taxon>
        <taxon>Metazoa</taxon>
        <taxon>Chordata</taxon>
        <taxon>Craniata</taxon>
        <taxon>Vertebrata</taxon>
        <taxon>Euteleostomi</taxon>
        <taxon>Actinopterygii</taxon>
        <taxon>Neopterygii</taxon>
        <taxon>Teleostei</taxon>
        <taxon>Ostariophysi</taxon>
        <taxon>Cypriniformes</taxon>
        <taxon>Danionidae</taxon>
        <taxon>Danioninae</taxon>
        <taxon>Danio</taxon>
    </lineage>
</organism>
<keyword id="KW-0227">DNA damage</keyword>
<keyword id="KW-0233">DNA recombination</keyword>
<keyword id="KW-0234">DNA repair</keyword>
<keyword id="KW-0539">Nucleus</keyword>
<keyword id="KW-1185">Reference proteome</keyword>
<keyword id="KW-0804">Transcription</keyword>
<keyword id="KW-0805">Transcription regulation</keyword>
<accession>A1L1F6</accession>
<gene>
    <name type="primary">ino80db</name>
    <name type="ORF">zgc:153949</name>
</gene>
<name>I80DB_DANRE</name>
<reference key="1">
    <citation type="submission" date="2006-12" db="EMBL/GenBank/DDBJ databases">
        <authorList>
            <consortium name="NIH - Zebrafish Gene Collection (ZGC) project"/>
        </authorList>
    </citation>
    <scope>NUCLEOTIDE SEQUENCE [LARGE SCALE MRNA]</scope>
</reference>
<protein>
    <recommendedName>
        <fullName evidence="3">INO80 complex subunit D-B</fullName>
    </recommendedName>
</protein>
<comment type="function">
    <text evidence="1">Putative regulatory component of the chromatin remodeling INO80 complex which is involved in transcriptional regulation, DNA replication and probably DNA repair.</text>
</comment>
<comment type="subunit">
    <text evidence="1">Component of the chromatin-remodeling INO80 complex.</text>
</comment>
<comment type="subcellular location">
    <subcellularLocation>
        <location evidence="1">Nucleus</location>
    </subcellularLocation>
</comment>
<comment type="similarity">
    <text evidence="3">Belongs to the INO80D family.</text>
</comment>
<feature type="chain" id="PRO_0000319587" description="INO80 complex subunit D-B">
    <location>
        <begin position="1"/>
        <end position="843"/>
    </location>
</feature>
<feature type="region of interest" description="Disordered" evidence="2">
    <location>
        <begin position="159"/>
        <end position="216"/>
    </location>
</feature>
<feature type="region of interest" description="Disordered" evidence="2">
    <location>
        <begin position="221"/>
        <end position="240"/>
    </location>
</feature>
<feature type="region of interest" description="Disordered" evidence="2">
    <location>
        <begin position="503"/>
        <end position="550"/>
    </location>
</feature>
<feature type="region of interest" description="Disordered" evidence="2">
    <location>
        <begin position="695"/>
        <end position="726"/>
    </location>
</feature>
<feature type="region of interest" description="Disordered" evidence="2">
    <location>
        <begin position="791"/>
        <end position="843"/>
    </location>
</feature>
<feature type="compositionally biased region" description="Basic and acidic residues" evidence="2">
    <location>
        <begin position="159"/>
        <end position="175"/>
    </location>
</feature>
<feature type="compositionally biased region" description="Polar residues" evidence="2">
    <location>
        <begin position="176"/>
        <end position="187"/>
    </location>
</feature>
<feature type="compositionally biased region" description="Polar residues" evidence="2">
    <location>
        <begin position="197"/>
        <end position="216"/>
    </location>
</feature>
<feature type="compositionally biased region" description="Polar residues" evidence="2">
    <location>
        <begin position="221"/>
        <end position="231"/>
    </location>
</feature>
<feature type="compositionally biased region" description="Basic residues" evidence="2">
    <location>
        <begin position="503"/>
        <end position="540"/>
    </location>
</feature>
<feature type="compositionally biased region" description="Pro residues" evidence="2">
    <location>
        <begin position="705"/>
        <end position="717"/>
    </location>
</feature>
<feature type="compositionally biased region" description="Low complexity" evidence="2">
    <location>
        <begin position="796"/>
        <end position="821"/>
    </location>
</feature>
<dbReference type="EMBL" id="BC129037">
    <property type="protein sequence ID" value="AAI29038.1"/>
    <property type="molecule type" value="mRNA"/>
</dbReference>
<dbReference type="RefSeq" id="NP_001074057.1">
    <property type="nucleotide sequence ID" value="NM_001080588.1"/>
</dbReference>
<dbReference type="SMR" id="A1L1F6"/>
<dbReference type="STRING" id="7955.ENSDARP00000084158"/>
<dbReference type="PaxDb" id="7955-ENSDARP00000084158"/>
<dbReference type="GeneID" id="563304"/>
<dbReference type="KEGG" id="dre:563304"/>
<dbReference type="AGR" id="ZFIN:ZDB-GENE-070112-2072"/>
<dbReference type="CTD" id="563304"/>
<dbReference type="ZFIN" id="ZDB-GENE-070112-2072">
    <property type="gene designation" value="ino80db"/>
</dbReference>
<dbReference type="eggNOG" id="ENOG502QQC5">
    <property type="taxonomic scope" value="Eukaryota"/>
</dbReference>
<dbReference type="InParanoid" id="A1L1F6"/>
<dbReference type="OrthoDB" id="10038011at2759"/>
<dbReference type="PhylomeDB" id="A1L1F6"/>
<dbReference type="PRO" id="PR:A1L1F6"/>
<dbReference type="Proteomes" id="UP000000437">
    <property type="component" value="Chromosome 6"/>
</dbReference>
<dbReference type="GO" id="GO:0005634">
    <property type="term" value="C:nucleus"/>
    <property type="evidence" value="ECO:0000318"/>
    <property type="project" value="GO_Central"/>
</dbReference>
<dbReference type="GO" id="GO:0006310">
    <property type="term" value="P:DNA recombination"/>
    <property type="evidence" value="ECO:0007669"/>
    <property type="project" value="UniProtKB-KW"/>
</dbReference>
<dbReference type="GO" id="GO:0006281">
    <property type="term" value="P:DNA repair"/>
    <property type="evidence" value="ECO:0007669"/>
    <property type="project" value="UniProtKB-KW"/>
</dbReference>
<dbReference type="InterPro" id="IPR025927">
    <property type="entry name" value="Potential_DNA-bd"/>
</dbReference>
<dbReference type="PANTHER" id="PTHR16198">
    <property type="match status" value="1"/>
</dbReference>
<dbReference type="PANTHER" id="PTHR16198:SF2">
    <property type="entry name" value="INO80 COMPLEX SUBUNIT D"/>
    <property type="match status" value="1"/>
</dbReference>
<dbReference type="Pfam" id="PF13891">
    <property type="entry name" value="zf-C3Hc3H"/>
    <property type="match status" value="2"/>
</dbReference>
<evidence type="ECO:0000250" key="1"/>
<evidence type="ECO:0000256" key="2">
    <source>
        <dbReference type="SAM" id="MobiDB-lite"/>
    </source>
</evidence>
<evidence type="ECO:0000305" key="3"/>